<feature type="chain" id="PRO_0000176385" description="Asparagine--tRNA ligase">
    <location>
        <begin position="1"/>
        <end position="463"/>
    </location>
</feature>
<organism>
    <name type="scientific">Bacillus anthracis</name>
    <dbReference type="NCBI Taxonomy" id="1392"/>
    <lineage>
        <taxon>Bacteria</taxon>
        <taxon>Bacillati</taxon>
        <taxon>Bacillota</taxon>
        <taxon>Bacilli</taxon>
        <taxon>Bacillales</taxon>
        <taxon>Bacillaceae</taxon>
        <taxon>Bacillus</taxon>
        <taxon>Bacillus cereus group</taxon>
    </lineage>
</organism>
<accession>Q81L32</accession>
<accession>Q6HSI7</accession>
<accession>Q6KLT2</accession>
<gene>
    <name evidence="1" type="primary">asnS</name>
    <name type="ordered locus">BA_4802</name>
    <name type="ordered locus">GBAA_4802</name>
    <name type="ordered locus">BAS4454</name>
</gene>
<reference key="1">
    <citation type="journal article" date="2003" name="Nature">
        <title>The genome sequence of Bacillus anthracis Ames and comparison to closely related bacteria.</title>
        <authorList>
            <person name="Read T.D."/>
            <person name="Peterson S.N."/>
            <person name="Tourasse N.J."/>
            <person name="Baillie L.W."/>
            <person name="Paulsen I.T."/>
            <person name="Nelson K.E."/>
            <person name="Tettelin H."/>
            <person name="Fouts D.E."/>
            <person name="Eisen J.A."/>
            <person name="Gill S.R."/>
            <person name="Holtzapple E.K."/>
            <person name="Okstad O.A."/>
            <person name="Helgason E."/>
            <person name="Rilstone J."/>
            <person name="Wu M."/>
            <person name="Kolonay J.F."/>
            <person name="Beanan M.J."/>
            <person name="Dodson R.J."/>
            <person name="Brinkac L.M."/>
            <person name="Gwinn M.L."/>
            <person name="DeBoy R.T."/>
            <person name="Madpu R."/>
            <person name="Daugherty S.C."/>
            <person name="Durkin A.S."/>
            <person name="Haft D.H."/>
            <person name="Nelson W.C."/>
            <person name="Peterson J.D."/>
            <person name="Pop M."/>
            <person name="Khouri H.M."/>
            <person name="Radune D."/>
            <person name="Benton J.L."/>
            <person name="Mahamoud Y."/>
            <person name="Jiang L."/>
            <person name="Hance I.R."/>
            <person name="Weidman J.F."/>
            <person name="Berry K.J."/>
            <person name="Plaut R.D."/>
            <person name="Wolf A.M."/>
            <person name="Watkins K.L."/>
            <person name="Nierman W.C."/>
            <person name="Hazen A."/>
            <person name="Cline R.T."/>
            <person name="Redmond C."/>
            <person name="Thwaite J.E."/>
            <person name="White O."/>
            <person name="Salzberg S.L."/>
            <person name="Thomason B."/>
            <person name="Friedlander A.M."/>
            <person name="Koehler T.M."/>
            <person name="Hanna P.C."/>
            <person name="Kolstoe A.-B."/>
            <person name="Fraser C.M."/>
        </authorList>
    </citation>
    <scope>NUCLEOTIDE SEQUENCE [LARGE SCALE GENOMIC DNA]</scope>
    <source>
        <strain>Ames / isolate Porton</strain>
    </source>
</reference>
<reference key="2">
    <citation type="journal article" date="2009" name="J. Bacteriol.">
        <title>The complete genome sequence of Bacillus anthracis Ames 'Ancestor'.</title>
        <authorList>
            <person name="Ravel J."/>
            <person name="Jiang L."/>
            <person name="Stanley S.T."/>
            <person name="Wilson M.R."/>
            <person name="Decker R.S."/>
            <person name="Read T.D."/>
            <person name="Worsham P."/>
            <person name="Keim P.S."/>
            <person name="Salzberg S.L."/>
            <person name="Fraser-Liggett C.M."/>
            <person name="Rasko D.A."/>
        </authorList>
    </citation>
    <scope>NUCLEOTIDE SEQUENCE [LARGE SCALE GENOMIC DNA]</scope>
    <source>
        <strain>Ames ancestor</strain>
    </source>
</reference>
<reference key="3">
    <citation type="submission" date="2004-01" db="EMBL/GenBank/DDBJ databases">
        <title>Complete genome sequence of Bacillus anthracis Sterne.</title>
        <authorList>
            <person name="Brettin T.S."/>
            <person name="Bruce D."/>
            <person name="Challacombe J.F."/>
            <person name="Gilna P."/>
            <person name="Han C."/>
            <person name="Hill K."/>
            <person name="Hitchcock P."/>
            <person name="Jackson P."/>
            <person name="Keim P."/>
            <person name="Longmire J."/>
            <person name="Lucas S."/>
            <person name="Okinaka R."/>
            <person name="Richardson P."/>
            <person name="Rubin E."/>
            <person name="Tice H."/>
        </authorList>
    </citation>
    <scope>NUCLEOTIDE SEQUENCE [LARGE SCALE GENOMIC DNA]</scope>
    <source>
        <strain>Sterne</strain>
    </source>
</reference>
<keyword id="KW-0030">Aminoacyl-tRNA synthetase</keyword>
<keyword id="KW-0067">ATP-binding</keyword>
<keyword id="KW-0963">Cytoplasm</keyword>
<keyword id="KW-0436">Ligase</keyword>
<keyword id="KW-0547">Nucleotide-binding</keyword>
<keyword id="KW-0648">Protein biosynthesis</keyword>
<keyword id="KW-1185">Reference proteome</keyword>
<protein>
    <recommendedName>
        <fullName evidence="1">Asparagine--tRNA ligase</fullName>
        <ecNumber evidence="1">6.1.1.22</ecNumber>
    </recommendedName>
    <alternativeName>
        <fullName evidence="1">Asparaginyl-tRNA synthetase</fullName>
        <shortName evidence="1">AsnRS</shortName>
    </alternativeName>
</protein>
<name>SYN_BACAN</name>
<evidence type="ECO:0000255" key="1">
    <source>
        <dbReference type="HAMAP-Rule" id="MF_00534"/>
    </source>
</evidence>
<proteinExistence type="inferred from homology"/>
<dbReference type="EC" id="6.1.1.22" evidence="1"/>
<dbReference type="EMBL" id="AE016879">
    <property type="protein sequence ID" value="AAP28491.1"/>
    <property type="molecule type" value="Genomic_DNA"/>
</dbReference>
<dbReference type="EMBL" id="AE017334">
    <property type="protein sequence ID" value="AAT33922.1"/>
    <property type="molecule type" value="Genomic_DNA"/>
</dbReference>
<dbReference type="EMBL" id="AE017225">
    <property type="protein sequence ID" value="AAT56752.1"/>
    <property type="molecule type" value="Genomic_DNA"/>
</dbReference>
<dbReference type="RefSeq" id="NP_847005.1">
    <property type="nucleotide sequence ID" value="NC_003997.3"/>
</dbReference>
<dbReference type="RefSeq" id="WP_000432163.1">
    <property type="nucleotide sequence ID" value="NZ_WXXJ01000026.1"/>
</dbReference>
<dbReference type="RefSeq" id="YP_030701.1">
    <property type="nucleotide sequence ID" value="NC_005945.1"/>
</dbReference>
<dbReference type="SMR" id="Q81L32"/>
<dbReference type="IntAct" id="Q81L32">
    <property type="interactions" value="3"/>
</dbReference>
<dbReference type="STRING" id="261594.GBAA_4802"/>
<dbReference type="DNASU" id="1083928"/>
<dbReference type="GeneID" id="45024431"/>
<dbReference type="KEGG" id="ban:BA_4802"/>
<dbReference type="KEGG" id="bar:GBAA_4802"/>
<dbReference type="KEGG" id="bat:BAS4454"/>
<dbReference type="PATRIC" id="fig|198094.11.peg.4763"/>
<dbReference type="eggNOG" id="COG0017">
    <property type="taxonomic scope" value="Bacteria"/>
</dbReference>
<dbReference type="HOGENOM" id="CLU_004553_2_0_9"/>
<dbReference type="OMA" id="PEMAFYD"/>
<dbReference type="OrthoDB" id="9762036at2"/>
<dbReference type="Proteomes" id="UP000000427">
    <property type="component" value="Chromosome"/>
</dbReference>
<dbReference type="Proteomes" id="UP000000594">
    <property type="component" value="Chromosome"/>
</dbReference>
<dbReference type="GO" id="GO:0005737">
    <property type="term" value="C:cytoplasm"/>
    <property type="evidence" value="ECO:0007669"/>
    <property type="project" value="UniProtKB-SubCell"/>
</dbReference>
<dbReference type="GO" id="GO:0004816">
    <property type="term" value="F:asparagine-tRNA ligase activity"/>
    <property type="evidence" value="ECO:0007669"/>
    <property type="project" value="UniProtKB-UniRule"/>
</dbReference>
<dbReference type="GO" id="GO:0005524">
    <property type="term" value="F:ATP binding"/>
    <property type="evidence" value="ECO:0007669"/>
    <property type="project" value="UniProtKB-UniRule"/>
</dbReference>
<dbReference type="GO" id="GO:0140096">
    <property type="term" value="F:catalytic activity, acting on a protein"/>
    <property type="evidence" value="ECO:0007669"/>
    <property type="project" value="UniProtKB-ARBA"/>
</dbReference>
<dbReference type="GO" id="GO:0003676">
    <property type="term" value="F:nucleic acid binding"/>
    <property type="evidence" value="ECO:0007669"/>
    <property type="project" value="InterPro"/>
</dbReference>
<dbReference type="GO" id="GO:0016740">
    <property type="term" value="F:transferase activity"/>
    <property type="evidence" value="ECO:0007669"/>
    <property type="project" value="UniProtKB-ARBA"/>
</dbReference>
<dbReference type="GO" id="GO:0006421">
    <property type="term" value="P:asparaginyl-tRNA aminoacylation"/>
    <property type="evidence" value="ECO:0007669"/>
    <property type="project" value="UniProtKB-UniRule"/>
</dbReference>
<dbReference type="CDD" id="cd00776">
    <property type="entry name" value="AsxRS_core"/>
    <property type="match status" value="1"/>
</dbReference>
<dbReference type="CDD" id="cd04318">
    <property type="entry name" value="EcAsnRS_like_N"/>
    <property type="match status" value="1"/>
</dbReference>
<dbReference type="FunFam" id="3.30.930.10:FF:000016">
    <property type="entry name" value="Asparagine--tRNA ligase"/>
    <property type="match status" value="1"/>
</dbReference>
<dbReference type="Gene3D" id="3.30.930.10">
    <property type="entry name" value="Bira Bifunctional Protein, Domain 2"/>
    <property type="match status" value="1"/>
</dbReference>
<dbReference type="Gene3D" id="2.40.50.140">
    <property type="entry name" value="Nucleic acid-binding proteins"/>
    <property type="match status" value="1"/>
</dbReference>
<dbReference type="HAMAP" id="MF_00534">
    <property type="entry name" value="Asn_tRNA_synth"/>
    <property type="match status" value="1"/>
</dbReference>
<dbReference type="InterPro" id="IPR004364">
    <property type="entry name" value="Aa-tRNA-synt_II"/>
</dbReference>
<dbReference type="InterPro" id="IPR006195">
    <property type="entry name" value="aa-tRNA-synth_II"/>
</dbReference>
<dbReference type="InterPro" id="IPR045864">
    <property type="entry name" value="aa-tRNA-synth_II/BPL/LPL"/>
</dbReference>
<dbReference type="InterPro" id="IPR004522">
    <property type="entry name" value="Asn-tRNA-ligase"/>
</dbReference>
<dbReference type="InterPro" id="IPR002312">
    <property type="entry name" value="Asp/Asn-tRNA-synth_IIb"/>
</dbReference>
<dbReference type="InterPro" id="IPR012340">
    <property type="entry name" value="NA-bd_OB-fold"/>
</dbReference>
<dbReference type="InterPro" id="IPR004365">
    <property type="entry name" value="NA-bd_OB_tRNA"/>
</dbReference>
<dbReference type="NCBIfam" id="TIGR00457">
    <property type="entry name" value="asnS"/>
    <property type="match status" value="1"/>
</dbReference>
<dbReference type="NCBIfam" id="NF003037">
    <property type="entry name" value="PRK03932.1"/>
    <property type="match status" value="1"/>
</dbReference>
<dbReference type="PANTHER" id="PTHR22594:SF34">
    <property type="entry name" value="ASPARAGINE--TRNA LIGASE, MITOCHONDRIAL-RELATED"/>
    <property type="match status" value="1"/>
</dbReference>
<dbReference type="PANTHER" id="PTHR22594">
    <property type="entry name" value="ASPARTYL/LYSYL-TRNA SYNTHETASE"/>
    <property type="match status" value="1"/>
</dbReference>
<dbReference type="Pfam" id="PF00152">
    <property type="entry name" value="tRNA-synt_2"/>
    <property type="match status" value="1"/>
</dbReference>
<dbReference type="Pfam" id="PF01336">
    <property type="entry name" value="tRNA_anti-codon"/>
    <property type="match status" value="1"/>
</dbReference>
<dbReference type="PRINTS" id="PR01042">
    <property type="entry name" value="TRNASYNTHASP"/>
</dbReference>
<dbReference type="SUPFAM" id="SSF55681">
    <property type="entry name" value="Class II aaRS and biotin synthetases"/>
    <property type="match status" value="1"/>
</dbReference>
<dbReference type="SUPFAM" id="SSF50249">
    <property type="entry name" value="Nucleic acid-binding proteins"/>
    <property type="match status" value="1"/>
</dbReference>
<dbReference type="PROSITE" id="PS50862">
    <property type="entry name" value="AA_TRNA_LIGASE_II"/>
    <property type="match status" value="1"/>
</dbReference>
<sequence>MENTLVKSLYRDTDKYAGQTVQVSGWIRNLRDSKAFGFIELNDGSFFKSVQIVFDTELDNFKEIAKLPLSSSVKVEGKVIATPGAKQPFEIKAEKIDIEGLSDSDYPLQKKRHTFEYLRTIAHLRPRTNAFSATFRVRSIAAFAIHQFFQERGFVHVHTPIITGSDTEGAGEMFRVTTQDLNNVPKGEDGQVDESKDFFGKETNLTVSGQLNAEAYALAFRDVYTFGPTFRAENSNTTRHAAEFWMVEPEIAFAELGDVMNLTEDMLKYAMKYVLEHAPEEMEFFNSFVDKTVLERMNNVINSDFGRITYTEAIKVLQESGADFKYPVEWGIDLQTEHERYLSEEIFKRPVFVTDYPKDIKAFYMRLNDDGKTVAATDLLVPGIGELIGGSQREERMDVLVDRIKELGMNEEDYWWYLELRKYGGTKHAGFGLGFERFLMYITGMANIRDVIPFPRTPGSSEF</sequence>
<comment type="catalytic activity">
    <reaction evidence="1">
        <text>tRNA(Asn) + L-asparagine + ATP = L-asparaginyl-tRNA(Asn) + AMP + diphosphate + H(+)</text>
        <dbReference type="Rhea" id="RHEA:11180"/>
        <dbReference type="Rhea" id="RHEA-COMP:9659"/>
        <dbReference type="Rhea" id="RHEA-COMP:9674"/>
        <dbReference type="ChEBI" id="CHEBI:15378"/>
        <dbReference type="ChEBI" id="CHEBI:30616"/>
        <dbReference type="ChEBI" id="CHEBI:33019"/>
        <dbReference type="ChEBI" id="CHEBI:58048"/>
        <dbReference type="ChEBI" id="CHEBI:78442"/>
        <dbReference type="ChEBI" id="CHEBI:78515"/>
        <dbReference type="ChEBI" id="CHEBI:456215"/>
        <dbReference type="EC" id="6.1.1.22"/>
    </reaction>
</comment>
<comment type="subunit">
    <text evidence="1">Homodimer.</text>
</comment>
<comment type="subcellular location">
    <subcellularLocation>
        <location evidence="1">Cytoplasm</location>
    </subcellularLocation>
</comment>
<comment type="similarity">
    <text evidence="1">Belongs to the class-II aminoacyl-tRNA synthetase family.</text>
</comment>